<organism>
    <name type="scientific">Cupriavidus taiwanensis (strain DSM 17343 / BCRC 17206 / CCUG 44338 / CIP 107171 / LMG 19424 / R1)</name>
    <name type="common">Ralstonia taiwanensis (strain LMG 19424)</name>
    <dbReference type="NCBI Taxonomy" id="977880"/>
    <lineage>
        <taxon>Bacteria</taxon>
        <taxon>Pseudomonadati</taxon>
        <taxon>Pseudomonadota</taxon>
        <taxon>Betaproteobacteria</taxon>
        <taxon>Burkholderiales</taxon>
        <taxon>Burkholderiaceae</taxon>
        <taxon>Cupriavidus</taxon>
    </lineage>
</organism>
<reference key="1">
    <citation type="journal article" date="2008" name="Genome Res.">
        <title>Genome sequence of the beta-rhizobium Cupriavidus taiwanensis and comparative genomics of rhizobia.</title>
        <authorList>
            <person name="Amadou C."/>
            <person name="Pascal G."/>
            <person name="Mangenot S."/>
            <person name="Glew M."/>
            <person name="Bontemps C."/>
            <person name="Capela D."/>
            <person name="Carrere S."/>
            <person name="Cruveiller S."/>
            <person name="Dossat C."/>
            <person name="Lajus A."/>
            <person name="Marchetti M."/>
            <person name="Poinsot V."/>
            <person name="Rouy Z."/>
            <person name="Servin B."/>
            <person name="Saad M."/>
            <person name="Schenowitz C."/>
            <person name="Barbe V."/>
            <person name="Batut J."/>
            <person name="Medigue C."/>
            <person name="Masson-Boivin C."/>
        </authorList>
    </citation>
    <scope>NUCLEOTIDE SEQUENCE [LARGE SCALE GENOMIC DNA]</scope>
    <source>
        <strain>DSM 17343 / BCRC 17206 / CCUG 44338 / CIP 107171 / LMG 19424 / R1</strain>
    </source>
</reference>
<accession>B2AGU6</accession>
<name>Y325_CUPTR</name>
<dbReference type="EMBL" id="CU633749">
    <property type="protein sequence ID" value="CAP62995.1"/>
    <property type="molecule type" value="Genomic_DNA"/>
</dbReference>
<dbReference type="RefSeq" id="WP_012351662.1">
    <property type="nucleotide sequence ID" value="NC_010528.1"/>
</dbReference>
<dbReference type="SMR" id="B2AGU6"/>
<dbReference type="GeneID" id="29762431"/>
<dbReference type="KEGG" id="cti:RALTA_A0325"/>
<dbReference type="eggNOG" id="COG1660">
    <property type="taxonomic scope" value="Bacteria"/>
</dbReference>
<dbReference type="HOGENOM" id="CLU_059558_1_1_4"/>
<dbReference type="BioCyc" id="CTAI977880:RALTA_RS01590-MONOMER"/>
<dbReference type="Proteomes" id="UP000001692">
    <property type="component" value="Chromosome 1"/>
</dbReference>
<dbReference type="GO" id="GO:0005524">
    <property type="term" value="F:ATP binding"/>
    <property type="evidence" value="ECO:0007669"/>
    <property type="project" value="UniProtKB-UniRule"/>
</dbReference>
<dbReference type="GO" id="GO:0005525">
    <property type="term" value="F:GTP binding"/>
    <property type="evidence" value="ECO:0007669"/>
    <property type="project" value="UniProtKB-UniRule"/>
</dbReference>
<dbReference type="HAMAP" id="MF_00636">
    <property type="entry name" value="RapZ_like"/>
    <property type="match status" value="1"/>
</dbReference>
<dbReference type="InterPro" id="IPR027417">
    <property type="entry name" value="P-loop_NTPase"/>
</dbReference>
<dbReference type="InterPro" id="IPR005337">
    <property type="entry name" value="RapZ-like"/>
</dbReference>
<dbReference type="InterPro" id="IPR053930">
    <property type="entry name" value="RapZ-like_N"/>
</dbReference>
<dbReference type="InterPro" id="IPR053931">
    <property type="entry name" value="RapZ_C"/>
</dbReference>
<dbReference type="NCBIfam" id="NF003828">
    <property type="entry name" value="PRK05416.1"/>
    <property type="match status" value="1"/>
</dbReference>
<dbReference type="PANTHER" id="PTHR30448">
    <property type="entry name" value="RNASE ADAPTER PROTEIN RAPZ"/>
    <property type="match status" value="1"/>
</dbReference>
<dbReference type="PANTHER" id="PTHR30448:SF0">
    <property type="entry name" value="RNASE ADAPTER PROTEIN RAPZ"/>
    <property type="match status" value="1"/>
</dbReference>
<dbReference type="Pfam" id="PF22740">
    <property type="entry name" value="PapZ_C"/>
    <property type="match status" value="1"/>
</dbReference>
<dbReference type="Pfam" id="PF03668">
    <property type="entry name" value="RapZ-like_N"/>
    <property type="match status" value="1"/>
</dbReference>
<dbReference type="PIRSF" id="PIRSF005052">
    <property type="entry name" value="P-loopkin"/>
    <property type="match status" value="1"/>
</dbReference>
<dbReference type="SUPFAM" id="SSF52540">
    <property type="entry name" value="P-loop containing nucleoside triphosphate hydrolases"/>
    <property type="match status" value="1"/>
</dbReference>
<keyword id="KW-0067">ATP-binding</keyword>
<keyword id="KW-0342">GTP-binding</keyword>
<keyword id="KW-0547">Nucleotide-binding</keyword>
<gene>
    <name type="ordered locus">RALTA_A0325</name>
</gene>
<feature type="chain" id="PRO_1000130745" description="Nucleotide-binding protein RALTA_A0325">
    <location>
        <begin position="1"/>
        <end position="291"/>
    </location>
</feature>
<feature type="binding site" evidence="1">
    <location>
        <begin position="8"/>
        <end position="15"/>
    </location>
    <ligand>
        <name>ATP</name>
        <dbReference type="ChEBI" id="CHEBI:30616"/>
    </ligand>
</feature>
<feature type="binding site" evidence="1">
    <location>
        <begin position="57"/>
        <end position="60"/>
    </location>
    <ligand>
        <name>GTP</name>
        <dbReference type="ChEBI" id="CHEBI:37565"/>
    </ligand>
</feature>
<protein>
    <recommendedName>
        <fullName evidence="1">Nucleotide-binding protein RALTA_A0325</fullName>
    </recommendedName>
</protein>
<sequence>MRIILITGISGSGKSVALNVLEDAGYYCVDNLPAQFIPELTRYLDAQGYTHLGVATDIRSRESLDQLPDTVRALAAEHQVEVIFLTASTDALVQRYSETRRRHPLSARTDGAAGGGAFNDTALMEAIEMERSLLSPLAEAAHRIDTSNVRTNTLRSWIKELIRDDSQRLTLLFESFGFKHGVPSDADMVFDVRSLPNPYYDLALRPLTGRDTPVIDFLQGQPMVLAMAEDIRAYVEKWLPSFIADNRSYLTVAIGCTGGQHRSVYIAERLANYFRAHGNVLVRHRELAPAG</sequence>
<evidence type="ECO:0000255" key="1">
    <source>
        <dbReference type="HAMAP-Rule" id="MF_00636"/>
    </source>
</evidence>
<comment type="function">
    <text evidence="1">Displays ATPase and GTPase activities.</text>
</comment>
<comment type="similarity">
    <text evidence="1">Belongs to the RapZ-like family.</text>
</comment>
<proteinExistence type="inferred from homology"/>